<reference key="1">
    <citation type="journal article" date="2002" name="Nat. Genet.">
        <title>Genome sequence of the endocellular obligate symbiont of tsetse flies, Wigglesworthia glossinidia.</title>
        <authorList>
            <person name="Akman L."/>
            <person name="Yamashita A."/>
            <person name="Watanabe H."/>
            <person name="Oshima K."/>
            <person name="Shiba T."/>
            <person name="Hattori M."/>
            <person name="Aksoy S."/>
        </authorList>
    </citation>
    <scope>NUCLEOTIDE SEQUENCE [LARGE SCALE GENOMIC DNA]</scope>
</reference>
<proteinExistence type="inferred from homology"/>
<evidence type="ECO:0000255" key="1">
    <source>
        <dbReference type="HAMAP-Rule" id="MF_01819"/>
    </source>
</evidence>
<name>SLYA_WIGBR</name>
<accession>Q8D2L8</accession>
<gene>
    <name evidence="1" type="primary">slyA</name>
    <name type="ordered locus">WIGBR3360</name>
</gene>
<keyword id="KW-0010">Activator</keyword>
<keyword id="KW-0238">DNA-binding</keyword>
<keyword id="KW-1185">Reference proteome</keyword>
<keyword id="KW-0678">Repressor</keyword>
<keyword id="KW-0804">Transcription</keyword>
<keyword id="KW-0805">Transcription regulation</keyword>
<protein>
    <recommendedName>
        <fullName evidence="1">Transcriptional regulator SlyA</fullName>
    </recommendedName>
</protein>
<sequence>MESPLGSDLSRLVRIWRALIDHRLKPLELTQTHWITLHNICQLPPEQSQIQLAKAIGIEQPSLVRTLDQLEEKGLITRHTCSNDRRAKRIKLTKSAEPIIQKVNNVIHTTREEILNGINQEEIQWLSQMISKLEKNILELYNKS</sequence>
<organism>
    <name type="scientific">Wigglesworthia glossinidia brevipalpis</name>
    <dbReference type="NCBI Taxonomy" id="36870"/>
    <lineage>
        <taxon>Bacteria</taxon>
        <taxon>Pseudomonadati</taxon>
        <taxon>Pseudomonadota</taxon>
        <taxon>Gammaproteobacteria</taxon>
        <taxon>Enterobacterales</taxon>
        <taxon>Erwiniaceae</taxon>
        <taxon>Wigglesworthia</taxon>
    </lineage>
</organism>
<feature type="chain" id="PRO_0000054396" description="Transcriptional regulator SlyA">
    <location>
        <begin position="1"/>
        <end position="144"/>
    </location>
</feature>
<feature type="domain" description="HTH marR-type" evidence="1">
    <location>
        <begin position="2"/>
        <end position="135"/>
    </location>
</feature>
<feature type="DNA-binding region" description="H-T-H motif" evidence="1">
    <location>
        <begin position="49"/>
        <end position="72"/>
    </location>
</feature>
<comment type="function">
    <text evidence="1">Transcription regulator that can specifically activate or repress expression of target genes.</text>
</comment>
<comment type="subunit">
    <text evidence="1">Homodimer.</text>
</comment>
<comment type="similarity">
    <text evidence="1">Belongs to the SlyA family.</text>
</comment>
<dbReference type="EMBL" id="BA000021">
    <property type="protein sequence ID" value="BAC24482.1"/>
    <property type="molecule type" value="Genomic_DNA"/>
</dbReference>
<dbReference type="SMR" id="Q8D2L8"/>
<dbReference type="STRING" id="36870.gene:10368836"/>
<dbReference type="KEGG" id="wbr:slyA"/>
<dbReference type="eggNOG" id="COG1846">
    <property type="taxonomic scope" value="Bacteria"/>
</dbReference>
<dbReference type="HOGENOM" id="CLU_083287_18_2_6"/>
<dbReference type="OrthoDB" id="5296557at2"/>
<dbReference type="Proteomes" id="UP000000562">
    <property type="component" value="Chromosome"/>
</dbReference>
<dbReference type="GO" id="GO:0003677">
    <property type="term" value="F:DNA binding"/>
    <property type="evidence" value="ECO:0007669"/>
    <property type="project" value="UniProtKB-UniRule"/>
</dbReference>
<dbReference type="GO" id="GO:0003700">
    <property type="term" value="F:DNA-binding transcription factor activity"/>
    <property type="evidence" value="ECO:0007669"/>
    <property type="project" value="UniProtKB-UniRule"/>
</dbReference>
<dbReference type="GO" id="GO:0006950">
    <property type="term" value="P:response to stress"/>
    <property type="evidence" value="ECO:0007669"/>
    <property type="project" value="TreeGrafter"/>
</dbReference>
<dbReference type="FunFam" id="1.10.10.10:FF:000261">
    <property type="entry name" value="Transcriptional regulator SlyA"/>
    <property type="match status" value="1"/>
</dbReference>
<dbReference type="Gene3D" id="1.10.10.10">
    <property type="entry name" value="Winged helix-like DNA-binding domain superfamily/Winged helix DNA-binding domain"/>
    <property type="match status" value="1"/>
</dbReference>
<dbReference type="HAMAP" id="MF_01819">
    <property type="entry name" value="HTH_type_SlyA"/>
    <property type="match status" value="1"/>
</dbReference>
<dbReference type="InterPro" id="IPR000835">
    <property type="entry name" value="HTH_MarR-typ"/>
</dbReference>
<dbReference type="InterPro" id="IPR039422">
    <property type="entry name" value="MarR/SlyA-like"/>
</dbReference>
<dbReference type="InterPro" id="IPR023187">
    <property type="entry name" value="Tscrpt_reg_MarR-type_CS"/>
</dbReference>
<dbReference type="InterPro" id="IPR023071">
    <property type="entry name" value="Tscrpt_reg_SlyA"/>
</dbReference>
<dbReference type="InterPro" id="IPR036388">
    <property type="entry name" value="WH-like_DNA-bd_sf"/>
</dbReference>
<dbReference type="InterPro" id="IPR036390">
    <property type="entry name" value="WH_DNA-bd_sf"/>
</dbReference>
<dbReference type="NCBIfam" id="NF002926">
    <property type="entry name" value="PRK03573.1"/>
    <property type="match status" value="1"/>
</dbReference>
<dbReference type="PANTHER" id="PTHR33164:SF64">
    <property type="entry name" value="TRANSCRIPTIONAL REGULATOR SLYA"/>
    <property type="match status" value="1"/>
</dbReference>
<dbReference type="PANTHER" id="PTHR33164">
    <property type="entry name" value="TRANSCRIPTIONAL REGULATOR, MARR FAMILY"/>
    <property type="match status" value="1"/>
</dbReference>
<dbReference type="Pfam" id="PF01047">
    <property type="entry name" value="MarR"/>
    <property type="match status" value="1"/>
</dbReference>
<dbReference type="PRINTS" id="PR00598">
    <property type="entry name" value="HTHMARR"/>
</dbReference>
<dbReference type="SMART" id="SM00347">
    <property type="entry name" value="HTH_MARR"/>
    <property type="match status" value="1"/>
</dbReference>
<dbReference type="SUPFAM" id="SSF46785">
    <property type="entry name" value="Winged helix' DNA-binding domain"/>
    <property type="match status" value="1"/>
</dbReference>
<dbReference type="PROSITE" id="PS01117">
    <property type="entry name" value="HTH_MARR_1"/>
    <property type="match status" value="1"/>
</dbReference>
<dbReference type="PROSITE" id="PS50995">
    <property type="entry name" value="HTH_MARR_2"/>
    <property type="match status" value="1"/>
</dbReference>